<evidence type="ECO:0000269" key="1">
    <source>
    </source>
</evidence>
<evidence type="ECO:0000269" key="2">
    <source>
    </source>
</evidence>
<evidence type="ECO:0000269" key="3">
    <source>
    </source>
</evidence>
<evidence type="ECO:0000269" key="4">
    <source>
    </source>
</evidence>
<evidence type="ECO:0000269" key="5">
    <source>
    </source>
</evidence>
<evidence type="ECO:0000269" key="6">
    <source>
    </source>
</evidence>
<evidence type="ECO:0000269" key="7">
    <source>
    </source>
</evidence>
<evidence type="ECO:0000269" key="8">
    <source>
    </source>
</evidence>
<evidence type="ECO:0000269" key="9">
    <source>
    </source>
</evidence>
<evidence type="ECO:0000269" key="10">
    <source>
    </source>
</evidence>
<evidence type="ECO:0000269" key="11">
    <source>
    </source>
</evidence>
<evidence type="ECO:0000269" key="12">
    <source>
    </source>
</evidence>
<evidence type="ECO:0000305" key="13"/>
<evidence type="ECO:0007744" key="14">
    <source>
    </source>
</evidence>
<organism>
    <name type="scientific">Saccharomyces cerevisiae (strain ATCC 204508 / S288c)</name>
    <name type="common">Baker's yeast</name>
    <dbReference type="NCBI Taxonomy" id="559292"/>
    <lineage>
        <taxon>Eukaryota</taxon>
        <taxon>Fungi</taxon>
        <taxon>Dikarya</taxon>
        <taxon>Ascomycota</taxon>
        <taxon>Saccharomycotina</taxon>
        <taxon>Saccharomycetes</taxon>
        <taxon>Saccharomycetales</taxon>
        <taxon>Saccharomycetaceae</taxon>
        <taxon>Saccharomyces</taxon>
    </lineage>
</organism>
<dbReference type="EMBL" id="X78993">
    <property type="protein sequence ID" value="CAA55604.1"/>
    <property type="molecule type" value="Genomic_DNA"/>
</dbReference>
<dbReference type="EMBL" id="Z35970">
    <property type="protein sequence ID" value="CAA85056.1"/>
    <property type="molecule type" value="Genomic_DNA"/>
</dbReference>
<dbReference type="EMBL" id="AY693000">
    <property type="protein sequence ID" value="AAT93019.1"/>
    <property type="molecule type" value="Genomic_DNA"/>
</dbReference>
<dbReference type="EMBL" id="BK006936">
    <property type="protein sequence ID" value="DAA07220.1"/>
    <property type="molecule type" value="Genomic_DNA"/>
</dbReference>
<dbReference type="PIR" id="S48266">
    <property type="entry name" value="S48266"/>
</dbReference>
<dbReference type="RefSeq" id="NP_009659.3">
    <property type="nucleotide sequence ID" value="NM_001178449.3"/>
</dbReference>
<dbReference type="SMR" id="P38260"/>
<dbReference type="BioGRID" id="32805">
    <property type="interactions" value="118"/>
</dbReference>
<dbReference type="DIP" id="DIP-4918N"/>
<dbReference type="FunCoup" id="P38260">
    <property type="interactions" value="295"/>
</dbReference>
<dbReference type="IntAct" id="P38260">
    <property type="interactions" value="32"/>
</dbReference>
<dbReference type="MINT" id="P38260"/>
<dbReference type="STRING" id="4932.YBR101C"/>
<dbReference type="ChEMBL" id="CHEMBL6102"/>
<dbReference type="iPTMnet" id="P38260"/>
<dbReference type="MetOSite" id="P38260"/>
<dbReference type="PaxDb" id="4932-YBR101C"/>
<dbReference type="PeptideAtlas" id="P38260"/>
<dbReference type="EnsemblFungi" id="YBR101C_mRNA">
    <property type="protein sequence ID" value="YBR101C"/>
    <property type="gene ID" value="YBR101C"/>
</dbReference>
<dbReference type="GeneID" id="852397"/>
<dbReference type="KEGG" id="sce:YBR101C"/>
<dbReference type="AGR" id="SGD:S000000305"/>
<dbReference type="SGD" id="S000000305">
    <property type="gene designation" value="FES1"/>
</dbReference>
<dbReference type="VEuPathDB" id="FungiDB:YBR101C"/>
<dbReference type="eggNOG" id="KOG2160">
    <property type="taxonomic scope" value="Eukaryota"/>
</dbReference>
<dbReference type="GeneTree" id="ENSGT00940000153909"/>
<dbReference type="HOGENOM" id="CLU_046722_1_0_1"/>
<dbReference type="InParanoid" id="P38260"/>
<dbReference type="OMA" id="LHWSIAN"/>
<dbReference type="OrthoDB" id="10250458at2759"/>
<dbReference type="BioCyc" id="YEAST:G3O-29063-MONOMER"/>
<dbReference type="BioGRID-ORCS" id="852397">
    <property type="hits" value="3 hits in 10 CRISPR screens"/>
</dbReference>
<dbReference type="PRO" id="PR:P38260"/>
<dbReference type="Proteomes" id="UP000002311">
    <property type="component" value="Chromosome II"/>
</dbReference>
<dbReference type="RNAct" id="P38260">
    <property type="molecule type" value="protein"/>
</dbReference>
<dbReference type="GO" id="GO:0005829">
    <property type="term" value="C:cytosol"/>
    <property type="evidence" value="ECO:0000314"/>
    <property type="project" value="SGD"/>
</dbReference>
<dbReference type="GO" id="GO:0005783">
    <property type="term" value="C:endoplasmic reticulum"/>
    <property type="evidence" value="ECO:0000318"/>
    <property type="project" value="GO_Central"/>
</dbReference>
<dbReference type="GO" id="GO:0000774">
    <property type="term" value="F:adenyl-nucleotide exchange factor activity"/>
    <property type="evidence" value="ECO:0000314"/>
    <property type="project" value="SGD"/>
</dbReference>
<dbReference type="GO" id="GO:0071629">
    <property type="term" value="P:cytoplasm protein quality control by the ubiquitin-proteasome system"/>
    <property type="evidence" value="ECO:0000314"/>
    <property type="project" value="SGD"/>
</dbReference>
<dbReference type="GO" id="GO:0006417">
    <property type="term" value="P:regulation of translation"/>
    <property type="evidence" value="ECO:0007669"/>
    <property type="project" value="UniProtKB-KW"/>
</dbReference>
<dbReference type="FunFam" id="1.25.10.10:FF:000619">
    <property type="entry name" value="Hsp70 nucleotide exchange factor"/>
    <property type="match status" value="1"/>
</dbReference>
<dbReference type="Gene3D" id="1.25.10.10">
    <property type="entry name" value="Leucine-rich Repeat Variant"/>
    <property type="match status" value="1"/>
</dbReference>
<dbReference type="InterPro" id="IPR011989">
    <property type="entry name" value="ARM-like"/>
</dbReference>
<dbReference type="InterPro" id="IPR016024">
    <property type="entry name" value="ARM-type_fold"/>
</dbReference>
<dbReference type="InterPro" id="IPR050693">
    <property type="entry name" value="Hsp70_NEF-Inhibitors"/>
</dbReference>
<dbReference type="InterPro" id="IPR013918">
    <property type="entry name" value="Nucleotide_exch_fac_Fes1"/>
</dbReference>
<dbReference type="PANTHER" id="PTHR19316:SF18">
    <property type="entry name" value="HSP70-BINDING PROTEIN 1"/>
    <property type="match status" value="1"/>
</dbReference>
<dbReference type="PANTHER" id="PTHR19316">
    <property type="entry name" value="PROTEIN FOLDING REGULATOR"/>
    <property type="match status" value="1"/>
</dbReference>
<dbReference type="Pfam" id="PF08609">
    <property type="entry name" value="Fes1"/>
    <property type="match status" value="1"/>
</dbReference>
<dbReference type="SUPFAM" id="SSF48371">
    <property type="entry name" value="ARM repeat"/>
    <property type="match status" value="1"/>
</dbReference>
<gene>
    <name type="primary">FES1</name>
    <name type="ordered locus">YBR101C</name>
    <name type="ORF">YBR0830</name>
</gene>
<protein>
    <recommendedName>
        <fullName>Hsp70 nucleotide exchange factor FES1</fullName>
    </recommendedName>
    <alternativeName>
        <fullName>Factor exchange for SSA1 protein 1</fullName>
    </alternativeName>
</protein>
<proteinExistence type="evidence at protein level"/>
<comment type="function">
    <text evidence="1 2 5 6 7 8 9 10 11 12">Involved in protein translation, propagation of [PSI+] prions, and polyamine tolerance. Functions as a nucleotide exchange factor (NEF), which accelerates the release of ADP, for the cytosolic Hsp70 chaperone SSA1 and the ribosome-associated Hsp70 chaperone SSB1. Required for fully efficient Hsp70-mediated folding of proteins.</text>
</comment>
<comment type="subunit">
    <text evidence="1 12">Interacts with the Hsp70 chaperones SSA1 and SSB1.</text>
</comment>
<comment type="interaction">
    <interactant intactId="EBI-21563">
        <id>P38260</id>
    </interactant>
    <interactant intactId="EBI-8591">
        <id>P10591</id>
        <label>SSA1</label>
    </interactant>
    <organismsDiffer>false</organismsDiffer>
    <experiments>3</experiments>
</comment>
<comment type="subcellular location">
    <subcellularLocation>
        <location evidence="1 3">Cytoplasm</location>
    </subcellularLocation>
</comment>
<comment type="miscellaneous">
    <text evidence="4">Present with 13100 molecules/cell in log phase SD medium.</text>
</comment>
<comment type="similarity">
    <text evidence="13">Belongs to the FES1 family.</text>
</comment>
<feature type="chain" id="PRO_0000202485" description="Hsp70 nucleotide exchange factor FES1">
    <location>
        <begin position="1"/>
        <end position="290"/>
    </location>
</feature>
<feature type="repeat" description="ARM 1">
    <location>
        <begin position="13"/>
        <end position="57"/>
    </location>
</feature>
<feature type="repeat" description="ARM 2">
    <location>
        <begin position="76"/>
        <end position="116"/>
    </location>
</feature>
<feature type="repeat" description="ARM 3">
    <location>
        <begin position="120"/>
        <end position="161"/>
    </location>
</feature>
<feature type="repeat" description="ARM 4">
    <location>
        <begin position="164"/>
        <end position="205"/>
    </location>
</feature>
<feature type="repeat" description="ARM 5">
    <location>
        <begin position="211"/>
        <end position="251"/>
    </location>
</feature>
<feature type="repeat" description="ARM 6">
    <location>
        <begin position="253"/>
        <end position="290"/>
    </location>
</feature>
<feature type="modified residue" description="Phosphoserine" evidence="14">
    <location>
        <position position="12"/>
    </location>
</feature>
<name>FES1_YEAST</name>
<keyword id="KW-0963">Cytoplasm</keyword>
<keyword id="KW-0597">Phosphoprotein</keyword>
<keyword id="KW-1185">Reference proteome</keyword>
<keyword id="KW-0677">Repeat</keyword>
<keyword id="KW-0810">Translation regulation</keyword>
<accession>P38260</accession>
<accession>D6VQA0</accession>
<sequence>MEKLLQWSIANSQGDKEAMARAGQPDPKLLQQLFGGGGPDDPTLMKESMAVIMNPEVDLETKLVAFDNFEMLIENLDNANNIENLKLWEPLLDVLVQTKDEELRAAALSIIGTAVQNNLDSQNNFMKYDNGLRSLIEIASDKTKPLDVRTKAFYALSNLIRNHKDISEKFFKLNGLDCIAPVLSDNTAKPKLKMRAIALLTAYLSSVKIDENIISVLRKDGVIESTIECLSDESNLNIIDRVLSFLSHLISSGIKFNEQELHKLNEGYKHIEPLKDRLNEDDYLAVKYVL</sequence>
<reference key="1">
    <citation type="journal article" date="1994" name="Yeast">
        <title>Analysis of a 70 kb region on the right arm of yeast chromosome II.</title>
        <authorList>
            <person name="Mannhaupt G."/>
            <person name="Stucka R."/>
            <person name="Ehnle S."/>
            <person name="Vetter I."/>
            <person name="Feldmann H."/>
        </authorList>
    </citation>
    <scope>NUCLEOTIDE SEQUENCE [GENOMIC DNA]</scope>
    <source>
        <strain>ATCC 204508 / S288c</strain>
    </source>
</reference>
<reference key="2">
    <citation type="journal article" date="1994" name="EMBO J.">
        <title>Complete DNA sequence of yeast chromosome II.</title>
        <authorList>
            <person name="Feldmann H."/>
            <person name="Aigle M."/>
            <person name="Aljinovic G."/>
            <person name="Andre B."/>
            <person name="Baclet M.C."/>
            <person name="Barthe C."/>
            <person name="Baur A."/>
            <person name="Becam A.-M."/>
            <person name="Biteau N."/>
            <person name="Boles E."/>
            <person name="Brandt T."/>
            <person name="Brendel M."/>
            <person name="Brueckner M."/>
            <person name="Bussereau F."/>
            <person name="Christiansen C."/>
            <person name="Contreras R."/>
            <person name="Crouzet M."/>
            <person name="Cziepluch C."/>
            <person name="Demolis N."/>
            <person name="Delaveau T."/>
            <person name="Doignon F."/>
            <person name="Domdey H."/>
            <person name="Duesterhus S."/>
            <person name="Dubois E."/>
            <person name="Dujon B."/>
            <person name="El Bakkoury M."/>
            <person name="Entian K.-D."/>
            <person name="Feuermann M."/>
            <person name="Fiers W."/>
            <person name="Fobo G.M."/>
            <person name="Fritz C."/>
            <person name="Gassenhuber J."/>
            <person name="Glansdorff N."/>
            <person name="Goffeau A."/>
            <person name="Grivell L.A."/>
            <person name="de Haan M."/>
            <person name="Hein C."/>
            <person name="Herbert C.J."/>
            <person name="Hollenberg C.P."/>
            <person name="Holmstroem K."/>
            <person name="Jacq C."/>
            <person name="Jacquet M."/>
            <person name="Jauniaux J.-C."/>
            <person name="Jonniaux J.-L."/>
            <person name="Kallesoee T."/>
            <person name="Kiesau P."/>
            <person name="Kirchrath L."/>
            <person name="Koetter P."/>
            <person name="Korol S."/>
            <person name="Liebl S."/>
            <person name="Logghe M."/>
            <person name="Lohan A.J.E."/>
            <person name="Louis E.J."/>
            <person name="Li Z.Y."/>
            <person name="Maat M.J."/>
            <person name="Mallet L."/>
            <person name="Mannhaupt G."/>
            <person name="Messenguy F."/>
            <person name="Miosga T."/>
            <person name="Molemans F."/>
            <person name="Mueller S."/>
            <person name="Nasr F."/>
            <person name="Obermaier B."/>
            <person name="Perea J."/>
            <person name="Pierard A."/>
            <person name="Piravandi E."/>
            <person name="Pohl F.M."/>
            <person name="Pohl T.M."/>
            <person name="Potier S."/>
            <person name="Proft M."/>
            <person name="Purnelle B."/>
            <person name="Ramezani Rad M."/>
            <person name="Rieger M."/>
            <person name="Rose M."/>
            <person name="Schaaff-Gerstenschlaeger I."/>
            <person name="Scherens B."/>
            <person name="Schwarzlose C."/>
            <person name="Skala J."/>
            <person name="Slonimski P.P."/>
            <person name="Smits P.H.M."/>
            <person name="Souciet J.-L."/>
            <person name="Steensma H.Y."/>
            <person name="Stucka R."/>
            <person name="Urrestarazu L.A."/>
            <person name="van der Aart Q.J.M."/>
            <person name="Van Dyck L."/>
            <person name="Vassarotti A."/>
            <person name="Vetter I."/>
            <person name="Vierendeels F."/>
            <person name="Vissers S."/>
            <person name="Wagner G."/>
            <person name="de Wergifosse P."/>
            <person name="Wolfe K.H."/>
            <person name="Zagulski M."/>
            <person name="Zimmermann F.K."/>
            <person name="Mewes H.-W."/>
            <person name="Kleine K."/>
        </authorList>
    </citation>
    <scope>NUCLEOTIDE SEQUENCE [LARGE SCALE GENOMIC DNA]</scope>
    <source>
        <strain>ATCC 204508 / S288c</strain>
    </source>
</reference>
<reference key="3">
    <citation type="journal article" date="2014" name="G3 (Bethesda)">
        <title>The reference genome sequence of Saccharomyces cerevisiae: Then and now.</title>
        <authorList>
            <person name="Engel S.R."/>
            <person name="Dietrich F.S."/>
            <person name="Fisk D.G."/>
            <person name="Binkley G."/>
            <person name="Balakrishnan R."/>
            <person name="Costanzo M.C."/>
            <person name="Dwight S.S."/>
            <person name="Hitz B.C."/>
            <person name="Karra K."/>
            <person name="Nash R.S."/>
            <person name="Weng S."/>
            <person name="Wong E.D."/>
            <person name="Lloyd P."/>
            <person name="Skrzypek M.S."/>
            <person name="Miyasato S.R."/>
            <person name="Simison M."/>
            <person name="Cherry J.M."/>
        </authorList>
    </citation>
    <scope>GENOME REANNOTATION</scope>
    <source>
        <strain>ATCC 204508 / S288c</strain>
    </source>
</reference>
<reference key="4">
    <citation type="journal article" date="2007" name="Genome Res.">
        <title>Approaching a complete repository of sequence-verified protein-encoding clones for Saccharomyces cerevisiae.</title>
        <authorList>
            <person name="Hu Y."/>
            <person name="Rolfs A."/>
            <person name="Bhullar B."/>
            <person name="Murthy T.V.S."/>
            <person name="Zhu C."/>
            <person name="Berger M.F."/>
            <person name="Camargo A.A."/>
            <person name="Kelley F."/>
            <person name="McCarron S."/>
            <person name="Jepson D."/>
            <person name="Richardson A."/>
            <person name="Raphael J."/>
            <person name="Moreira D."/>
            <person name="Taycher E."/>
            <person name="Zuo D."/>
            <person name="Mohr S."/>
            <person name="Kane M.F."/>
            <person name="Williamson J."/>
            <person name="Simpson A.J.G."/>
            <person name="Bulyk M.L."/>
            <person name="Harlow E."/>
            <person name="Marsischky G."/>
            <person name="Kolodner R.D."/>
            <person name="LaBaer J."/>
        </authorList>
    </citation>
    <scope>NUCLEOTIDE SEQUENCE [GENOMIC DNA]</scope>
    <source>
        <strain>ATCC 204508 / S288c</strain>
    </source>
</reference>
<reference key="5">
    <citation type="journal article" date="2002" name="FEBS Lett.">
        <title>HspBP1, a homologue of the yeast Fes1 and Sls1 proteins, is an Hsc70 nucleotide exchange factor.</title>
        <authorList>
            <person name="Kabani M."/>
            <person name="McLellan C."/>
            <person name="Raynes D.A."/>
            <person name="Guerriero V."/>
            <person name="Brodsky J.L."/>
        </authorList>
    </citation>
    <scope>FUNCTION</scope>
</reference>
<reference key="6">
    <citation type="journal article" date="2002" name="Mol. Cell. Biol.">
        <title>Nucleotide exchange factor for the yeast Hsp70 molecular chaperone Ssa1p.</title>
        <authorList>
            <person name="Kabani M."/>
            <person name="Beckerich J.-M."/>
            <person name="Brodsky J.L."/>
        </authorList>
    </citation>
    <scope>FUNCTION</scope>
    <scope>SUBCELLULAR LOCATION</scope>
    <scope>INTERACTION WITH SSA1</scope>
</reference>
<reference key="7">
    <citation type="journal article" date="2003" name="Nature">
        <title>Global analysis of protein localization in budding yeast.</title>
        <authorList>
            <person name="Huh W.-K."/>
            <person name="Falvo J.V."/>
            <person name="Gerke L.C."/>
            <person name="Carroll A.S."/>
            <person name="Howson R.W."/>
            <person name="Weissman J.S."/>
            <person name="O'Shea E.K."/>
        </authorList>
    </citation>
    <scope>SUBCELLULAR LOCATION [LARGE SCALE ANALYSIS]</scope>
</reference>
<reference key="8">
    <citation type="journal article" date="2003" name="Nature">
        <title>Global analysis of protein expression in yeast.</title>
        <authorList>
            <person name="Ghaemmaghami S."/>
            <person name="Huh W.-K."/>
            <person name="Bower K."/>
            <person name="Howson R.W."/>
            <person name="Belle A."/>
            <person name="Dephoure N."/>
            <person name="O'Shea E.K."/>
            <person name="Weissman J.S."/>
        </authorList>
    </citation>
    <scope>LEVEL OF PROTEIN EXPRESSION [LARGE SCALE ANALYSIS]</scope>
</reference>
<reference key="9">
    <citation type="journal article" date="2004" name="Mol. Cell. Biol.">
        <title>Propagation of Saccharomyces cerevisiae [PSI+] prion is impaired by factors that regulate Hsp70 substrate binding.</title>
        <authorList>
            <person name="Jones G."/>
            <person name="Song Y."/>
            <person name="Chung S."/>
            <person name="Masison D.C."/>
        </authorList>
    </citation>
    <scope>FUNCTION</scope>
</reference>
<reference key="10">
    <citation type="journal article" date="2005" name="Arch. Biochem. Biophys.">
        <title>Distinct but overlapping functions of Hsp70, Hsp90, and an Hsp70 nucleotide exchange factor during protein biogenesis in yeast.</title>
        <authorList>
            <person name="Ahner A."/>
            <person name="Whyte F.M."/>
            <person name="Brodsky J.L."/>
        </authorList>
    </citation>
    <scope>FUNCTION</scope>
</reference>
<reference key="11">
    <citation type="journal article" date="2005" name="Cell. Mol. Life Sci.">
        <title>Mechanism of polyamine tolerance in yeast: novel regulators and insights.</title>
        <authorList>
            <person name="Porat Z."/>
            <person name="Wender N."/>
            <person name="Erez O."/>
            <person name="Kahana C."/>
        </authorList>
    </citation>
    <scope>FUNCTION</scope>
</reference>
<reference key="12">
    <citation type="journal article" date="2005" name="J. Biol. Chem.">
        <title>AGP2 encodes the major permease for high affinity polyamine import in Saccharomyces cerevisiae.</title>
        <authorList>
            <person name="Aouida M."/>
            <person name="Leduc A."/>
            <person name="Poulin R."/>
            <person name="Ramotar D."/>
        </authorList>
    </citation>
    <scope>FUNCTION</scope>
</reference>
<reference key="13">
    <citation type="journal article" date="2005" name="Mol. Cell">
        <title>Regulation of Hsp70 function by HspBP1: structural analysis reveals an alternate mechanism for Hsp70 nucleotide exchange.</title>
        <authorList>
            <person name="Shomura Y."/>
            <person name="Dragovic Z."/>
            <person name="Chang H.-C."/>
            <person name="Tzvetkov N."/>
            <person name="Young J.C."/>
            <person name="Brodsky J.L."/>
            <person name="Guerriero V. Jr."/>
            <person name="Hartl F.U."/>
            <person name="Bracher A."/>
        </authorList>
    </citation>
    <scope>FUNCTION</scope>
</reference>
<reference key="14">
    <citation type="journal article" date="2006" name="EMBO J.">
        <title>Chaperone network in the yeast cytosol: Hsp110 is revealed as an Hsp70 nucleotide exchange factor.</title>
        <authorList>
            <person name="Raviol H."/>
            <person name="Sadlish H."/>
            <person name="Rodriguez F."/>
            <person name="Mayer M.P."/>
            <person name="Bukau B."/>
        </authorList>
    </citation>
    <scope>FUNCTION</scope>
</reference>
<reference key="15">
    <citation type="journal article" date="2006" name="EMBO J.">
        <title>Molecular chaperones of the Hsp110 family act as nucleotide exchange factors of Hsp70s.</title>
        <authorList>
            <person name="Dragovic Z."/>
            <person name="Broadley S.A."/>
            <person name="Shomura Y."/>
            <person name="Bracher A."/>
            <person name="Hartl F.U."/>
        </authorList>
    </citation>
    <scope>FUNCTION</scope>
</reference>
<reference key="16">
    <citation type="journal article" date="2006" name="Biol. Chem.">
        <title>Fes1p acts as a nucleotide exchange factor for the ribosome-associated molecular chaperone Ssb1p.</title>
        <authorList>
            <person name="Dragovic Z."/>
            <person name="Shomura Y."/>
            <person name="Tzvetkov N."/>
            <person name="Hartl F.U."/>
            <person name="Bracher A."/>
        </authorList>
    </citation>
    <scope>FUNCTION</scope>
    <scope>INTERACTION WITH SSB1</scope>
</reference>
<reference key="17">
    <citation type="journal article" date="2008" name="Mol. Cell. Proteomics">
        <title>A multidimensional chromatography technology for in-depth phosphoproteome analysis.</title>
        <authorList>
            <person name="Albuquerque C.P."/>
            <person name="Smolka M.B."/>
            <person name="Payne S.H."/>
            <person name="Bafna V."/>
            <person name="Eng J."/>
            <person name="Zhou H."/>
        </authorList>
    </citation>
    <scope>PHOSPHORYLATION [LARGE SCALE ANALYSIS] AT SER-12</scope>
    <scope>IDENTIFICATION BY MASS SPECTROMETRY [LARGE SCALE ANALYSIS]</scope>
</reference>